<gene>
    <name evidence="1" type="primary">serS</name>
    <name type="ordered locus">PLES_24931</name>
</gene>
<comment type="function">
    <text evidence="1">Catalyzes the attachment of serine to tRNA(Ser). Is also able to aminoacylate tRNA(Sec) with serine, to form the misacylated tRNA L-seryl-tRNA(Sec), which will be further converted into selenocysteinyl-tRNA(Sec).</text>
</comment>
<comment type="catalytic activity">
    <reaction evidence="1">
        <text>tRNA(Ser) + L-serine + ATP = L-seryl-tRNA(Ser) + AMP + diphosphate + H(+)</text>
        <dbReference type="Rhea" id="RHEA:12292"/>
        <dbReference type="Rhea" id="RHEA-COMP:9669"/>
        <dbReference type="Rhea" id="RHEA-COMP:9703"/>
        <dbReference type="ChEBI" id="CHEBI:15378"/>
        <dbReference type="ChEBI" id="CHEBI:30616"/>
        <dbReference type="ChEBI" id="CHEBI:33019"/>
        <dbReference type="ChEBI" id="CHEBI:33384"/>
        <dbReference type="ChEBI" id="CHEBI:78442"/>
        <dbReference type="ChEBI" id="CHEBI:78533"/>
        <dbReference type="ChEBI" id="CHEBI:456215"/>
        <dbReference type="EC" id="6.1.1.11"/>
    </reaction>
</comment>
<comment type="catalytic activity">
    <reaction evidence="1">
        <text>tRNA(Sec) + L-serine + ATP = L-seryl-tRNA(Sec) + AMP + diphosphate + H(+)</text>
        <dbReference type="Rhea" id="RHEA:42580"/>
        <dbReference type="Rhea" id="RHEA-COMP:9742"/>
        <dbReference type="Rhea" id="RHEA-COMP:10128"/>
        <dbReference type="ChEBI" id="CHEBI:15378"/>
        <dbReference type="ChEBI" id="CHEBI:30616"/>
        <dbReference type="ChEBI" id="CHEBI:33019"/>
        <dbReference type="ChEBI" id="CHEBI:33384"/>
        <dbReference type="ChEBI" id="CHEBI:78442"/>
        <dbReference type="ChEBI" id="CHEBI:78533"/>
        <dbReference type="ChEBI" id="CHEBI:456215"/>
        <dbReference type="EC" id="6.1.1.11"/>
    </reaction>
</comment>
<comment type="pathway">
    <text evidence="1">Aminoacyl-tRNA biosynthesis; selenocysteinyl-tRNA(Sec) biosynthesis; L-seryl-tRNA(Sec) from L-serine and tRNA(Sec): step 1/1.</text>
</comment>
<comment type="subunit">
    <text evidence="1">Homodimer. The tRNA molecule binds across the dimer.</text>
</comment>
<comment type="subcellular location">
    <subcellularLocation>
        <location evidence="1">Cytoplasm</location>
    </subcellularLocation>
</comment>
<comment type="domain">
    <text evidence="1">Consists of two distinct domains, a catalytic core and a N-terminal extension that is involved in tRNA binding.</text>
</comment>
<comment type="similarity">
    <text evidence="1">Belongs to the class-II aminoacyl-tRNA synthetase family. Type-1 seryl-tRNA synthetase subfamily.</text>
</comment>
<reference key="1">
    <citation type="journal article" date="2009" name="Genome Res.">
        <title>Newly introduced genomic prophage islands are critical determinants of in vivo competitiveness in the Liverpool epidemic strain of Pseudomonas aeruginosa.</title>
        <authorList>
            <person name="Winstanley C."/>
            <person name="Langille M.G.I."/>
            <person name="Fothergill J.L."/>
            <person name="Kukavica-Ibrulj I."/>
            <person name="Paradis-Bleau C."/>
            <person name="Sanschagrin F."/>
            <person name="Thomson N.R."/>
            <person name="Winsor G.L."/>
            <person name="Quail M.A."/>
            <person name="Lennard N."/>
            <person name="Bignell A."/>
            <person name="Clarke L."/>
            <person name="Seeger K."/>
            <person name="Saunders D."/>
            <person name="Harris D."/>
            <person name="Parkhill J."/>
            <person name="Hancock R.E.W."/>
            <person name="Brinkman F.S.L."/>
            <person name="Levesque R.C."/>
        </authorList>
    </citation>
    <scope>NUCLEOTIDE SEQUENCE [LARGE SCALE GENOMIC DNA]</scope>
    <source>
        <strain>LESB58</strain>
    </source>
</reference>
<accession>B7UW10</accession>
<protein>
    <recommendedName>
        <fullName evidence="1">Serine--tRNA ligase</fullName>
        <ecNumber evidence="1">6.1.1.11</ecNumber>
    </recommendedName>
    <alternativeName>
        <fullName evidence="1">Seryl-tRNA synthetase</fullName>
        <shortName evidence="1">SerRS</shortName>
    </alternativeName>
    <alternativeName>
        <fullName evidence="1">Seryl-tRNA(Ser/Sec) synthetase</fullName>
    </alternativeName>
</protein>
<feature type="chain" id="PRO_1000199498" description="Serine--tRNA ligase">
    <location>
        <begin position="1"/>
        <end position="426"/>
    </location>
</feature>
<feature type="binding site" evidence="1">
    <location>
        <begin position="233"/>
        <end position="235"/>
    </location>
    <ligand>
        <name>L-serine</name>
        <dbReference type="ChEBI" id="CHEBI:33384"/>
    </ligand>
</feature>
<feature type="binding site" evidence="1">
    <location>
        <begin position="264"/>
        <end position="266"/>
    </location>
    <ligand>
        <name>ATP</name>
        <dbReference type="ChEBI" id="CHEBI:30616"/>
    </ligand>
</feature>
<feature type="binding site" evidence="1">
    <location>
        <position position="287"/>
    </location>
    <ligand>
        <name>L-serine</name>
        <dbReference type="ChEBI" id="CHEBI:33384"/>
    </ligand>
</feature>
<feature type="binding site" evidence="1">
    <location>
        <begin position="351"/>
        <end position="354"/>
    </location>
    <ligand>
        <name>ATP</name>
        <dbReference type="ChEBI" id="CHEBI:30616"/>
    </ligand>
</feature>
<feature type="binding site" evidence="1">
    <location>
        <position position="387"/>
    </location>
    <ligand>
        <name>L-serine</name>
        <dbReference type="ChEBI" id="CHEBI:33384"/>
    </ligand>
</feature>
<dbReference type="EC" id="6.1.1.11" evidence="1"/>
<dbReference type="EMBL" id="FM209186">
    <property type="protein sequence ID" value="CAW27219.1"/>
    <property type="molecule type" value="Genomic_DNA"/>
</dbReference>
<dbReference type="RefSeq" id="WP_003097631.1">
    <property type="nucleotide sequence ID" value="NC_011770.1"/>
</dbReference>
<dbReference type="SMR" id="B7UW10"/>
<dbReference type="KEGG" id="pag:PLES_24931"/>
<dbReference type="HOGENOM" id="CLU_023797_1_1_6"/>
<dbReference type="UniPathway" id="UPA00906">
    <property type="reaction ID" value="UER00895"/>
</dbReference>
<dbReference type="GO" id="GO:0005737">
    <property type="term" value="C:cytoplasm"/>
    <property type="evidence" value="ECO:0007669"/>
    <property type="project" value="UniProtKB-SubCell"/>
</dbReference>
<dbReference type="GO" id="GO:0005524">
    <property type="term" value="F:ATP binding"/>
    <property type="evidence" value="ECO:0007669"/>
    <property type="project" value="UniProtKB-UniRule"/>
</dbReference>
<dbReference type="GO" id="GO:0004828">
    <property type="term" value="F:serine-tRNA ligase activity"/>
    <property type="evidence" value="ECO:0007669"/>
    <property type="project" value="UniProtKB-UniRule"/>
</dbReference>
<dbReference type="GO" id="GO:0016260">
    <property type="term" value="P:selenocysteine biosynthetic process"/>
    <property type="evidence" value="ECO:0007669"/>
    <property type="project" value="UniProtKB-UniRule"/>
</dbReference>
<dbReference type="GO" id="GO:0006434">
    <property type="term" value="P:seryl-tRNA aminoacylation"/>
    <property type="evidence" value="ECO:0007669"/>
    <property type="project" value="UniProtKB-UniRule"/>
</dbReference>
<dbReference type="CDD" id="cd00770">
    <property type="entry name" value="SerRS_core"/>
    <property type="match status" value="1"/>
</dbReference>
<dbReference type="Gene3D" id="3.30.930.10">
    <property type="entry name" value="Bira Bifunctional Protein, Domain 2"/>
    <property type="match status" value="1"/>
</dbReference>
<dbReference type="Gene3D" id="1.10.287.40">
    <property type="entry name" value="Serine-tRNA synthetase, tRNA binding domain"/>
    <property type="match status" value="1"/>
</dbReference>
<dbReference type="HAMAP" id="MF_00176">
    <property type="entry name" value="Ser_tRNA_synth_type1"/>
    <property type="match status" value="1"/>
</dbReference>
<dbReference type="InterPro" id="IPR002314">
    <property type="entry name" value="aa-tRNA-synt_IIb"/>
</dbReference>
<dbReference type="InterPro" id="IPR006195">
    <property type="entry name" value="aa-tRNA-synth_II"/>
</dbReference>
<dbReference type="InterPro" id="IPR045864">
    <property type="entry name" value="aa-tRNA-synth_II/BPL/LPL"/>
</dbReference>
<dbReference type="InterPro" id="IPR002317">
    <property type="entry name" value="Ser-tRNA-ligase_type_1"/>
</dbReference>
<dbReference type="InterPro" id="IPR015866">
    <property type="entry name" value="Ser-tRNA-synth_1_N"/>
</dbReference>
<dbReference type="InterPro" id="IPR042103">
    <property type="entry name" value="SerRS_1_N_sf"/>
</dbReference>
<dbReference type="InterPro" id="IPR033729">
    <property type="entry name" value="SerRS_core"/>
</dbReference>
<dbReference type="InterPro" id="IPR010978">
    <property type="entry name" value="tRNA-bd_arm"/>
</dbReference>
<dbReference type="NCBIfam" id="TIGR00414">
    <property type="entry name" value="serS"/>
    <property type="match status" value="1"/>
</dbReference>
<dbReference type="PANTHER" id="PTHR43697:SF1">
    <property type="entry name" value="SERINE--TRNA LIGASE"/>
    <property type="match status" value="1"/>
</dbReference>
<dbReference type="PANTHER" id="PTHR43697">
    <property type="entry name" value="SERYL-TRNA SYNTHETASE"/>
    <property type="match status" value="1"/>
</dbReference>
<dbReference type="Pfam" id="PF02403">
    <property type="entry name" value="Seryl_tRNA_N"/>
    <property type="match status" value="1"/>
</dbReference>
<dbReference type="Pfam" id="PF00587">
    <property type="entry name" value="tRNA-synt_2b"/>
    <property type="match status" value="1"/>
</dbReference>
<dbReference type="PIRSF" id="PIRSF001529">
    <property type="entry name" value="Ser-tRNA-synth_IIa"/>
    <property type="match status" value="1"/>
</dbReference>
<dbReference type="PRINTS" id="PR00981">
    <property type="entry name" value="TRNASYNTHSER"/>
</dbReference>
<dbReference type="SUPFAM" id="SSF55681">
    <property type="entry name" value="Class II aaRS and biotin synthetases"/>
    <property type="match status" value="1"/>
</dbReference>
<dbReference type="SUPFAM" id="SSF46589">
    <property type="entry name" value="tRNA-binding arm"/>
    <property type="match status" value="1"/>
</dbReference>
<dbReference type="PROSITE" id="PS50862">
    <property type="entry name" value="AA_TRNA_LIGASE_II"/>
    <property type="match status" value="1"/>
</dbReference>
<evidence type="ECO:0000255" key="1">
    <source>
        <dbReference type="HAMAP-Rule" id="MF_00176"/>
    </source>
</evidence>
<proteinExistence type="inferred from homology"/>
<keyword id="KW-0030">Aminoacyl-tRNA synthetase</keyword>
<keyword id="KW-0067">ATP-binding</keyword>
<keyword id="KW-0963">Cytoplasm</keyword>
<keyword id="KW-0436">Ligase</keyword>
<keyword id="KW-0547">Nucleotide-binding</keyword>
<keyword id="KW-0648">Protein biosynthesis</keyword>
<name>SYS_PSEA8</name>
<organism>
    <name type="scientific">Pseudomonas aeruginosa (strain LESB58)</name>
    <dbReference type="NCBI Taxonomy" id="557722"/>
    <lineage>
        <taxon>Bacteria</taxon>
        <taxon>Pseudomonadati</taxon>
        <taxon>Pseudomonadota</taxon>
        <taxon>Gammaproteobacteria</taxon>
        <taxon>Pseudomonadales</taxon>
        <taxon>Pseudomonadaceae</taxon>
        <taxon>Pseudomonas</taxon>
    </lineage>
</organism>
<sequence length="426" mass="47232">MLDPKLVRTQPQEVAARLATRGFQLDVARIEALEEQRKSVQTRTEQLQAERNARSKAIGQAKQRGEDIAPLLADVDRMGSELEEGKRQLDAIQGELDAMLLGIPNLPHESVPVGADEDANVEVRRWGTPKTFDFEVKDHVALGERHGWLDFETAAKLSGARFALMRGPIARLHRALAQFMINLHTAEHGYEEAYTPYLVQAPALQGTGQLPKFEEDLFKIGRDGEADLYLIPTAEVSLTNIVSGQILDAKQLPLKFVAHTPCFRSEAGASGRDTRGMIRQHQFDKVEMVQIVDPATSYEALEGLTANAERVLQLLELPYRVLALCTGDMGFGATKTYDLEVWVPSQDKYREISSCSNCGDFQARRMQARYRNPETGKPELVHTLNGSGLAVGRTLVAVLENYQQADGSIRVPEVLKPYMAGIEVIG</sequence>